<comment type="function">
    <text evidence="1">Snake venom serine protease that may act in the hemostasis system of the prey.</text>
</comment>
<comment type="subunit">
    <text evidence="1">Monomer.</text>
</comment>
<comment type="subcellular location">
    <subcellularLocation>
        <location evidence="1">Secreted</location>
    </subcellularLocation>
</comment>
<comment type="tissue specificity">
    <text>Expressed by the venom gland.</text>
</comment>
<comment type="similarity">
    <text evidence="3">Belongs to the peptidase S1 family. Snake venom subfamily.</text>
</comment>
<dbReference type="EC" id="3.4.21.-"/>
<dbReference type="EMBL" id="AF395775">
    <property type="protein sequence ID" value="AAQ02905.1"/>
    <property type="molecule type" value="mRNA"/>
</dbReference>
<dbReference type="SMR" id="Q71QI2"/>
<dbReference type="MEROPS" id="S01.497"/>
<dbReference type="GO" id="GO:0005576">
    <property type="term" value="C:extracellular region"/>
    <property type="evidence" value="ECO:0007669"/>
    <property type="project" value="UniProtKB-SubCell"/>
</dbReference>
<dbReference type="GO" id="GO:0030141">
    <property type="term" value="C:secretory granule"/>
    <property type="evidence" value="ECO:0007669"/>
    <property type="project" value="TreeGrafter"/>
</dbReference>
<dbReference type="GO" id="GO:0004252">
    <property type="term" value="F:serine-type endopeptidase activity"/>
    <property type="evidence" value="ECO:0007669"/>
    <property type="project" value="InterPro"/>
</dbReference>
<dbReference type="GO" id="GO:0090729">
    <property type="term" value="F:toxin activity"/>
    <property type="evidence" value="ECO:0007669"/>
    <property type="project" value="UniProtKB-KW"/>
</dbReference>
<dbReference type="GO" id="GO:0006508">
    <property type="term" value="P:proteolysis"/>
    <property type="evidence" value="ECO:0007669"/>
    <property type="project" value="UniProtKB-KW"/>
</dbReference>
<dbReference type="CDD" id="cd00190">
    <property type="entry name" value="Tryp_SPc"/>
    <property type="match status" value="1"/>
</dbReference>
<dbReference type="FunFam" id="2.40.10.10:FF:000010">
    <property type="entry name" value="Kallikrein related peptidase 11"/>
    <property type="match status" value="1"/>
</dbReference>
<dbReference type="Gene3D" id="2.40.10.10">
    <property type="entry name" value="Trypsin-like serine proteases"/>
    <property type="match status" value="2"/>
</dbReference>
<dbReference type="InterPro" id="IPR009003">
    <property type="entry name" value="Peptidase_S1_PA"/>
</dbReference>
<dbReference type="InterPro" id="IPR043504">
    <property type="entry name" value="Peptidase_S1_PA_chymotrypsin"/>
</dbReference>
<dbReference type="InterPro" id="IPR001314">
    <property type="entry name" value="Peptidase_S1A"/>
</dbReference>
<dbReference type="InterPro" id="IPR001254">
    <property type="entry name" value="Trypsin_dom"/>
</dbReference>
<dbReference type="InterPro" id="IPR033116">
    <property type="entry name" value="TRYPSIN_SER"/>
</dbReference>
<dbReference type="PANTHER" id="PTHR24271:SF47">
    <property type="entry name" value="KALLIKREIN-1"/>
    <property type="match status" value="1"/>
</dbReference>
<dbReference type="PANTHER" id="PTHR24271">
    <property type="entry name" value="KALLIKREIN-RELATED"/>
    <property type="match status" value="1"/>
</dbReference>
<dbReference type="Pfam" id="PF00089">
    <property type="entry name" value="Trypsin"/>
    <property type="match status" value="1"/>
</dbReference>
<dbReference type="PRINTS" id="PR00722">
    <property type="entry name" value="CHYMOTRYPSIN"/>
</dbReference>
<dbReference type="SMART" id="SM00020">
    <property type="entry name" value="Tryp_SPc"/>
    <property type="match status" value="1"/>
</dbReference>
<dbReference type="SUPFAM" id="SSF50494">
    <property type="entry name" value="Trypsin-like serine proteases"/>
    <property type="match status" value="1"/>
</dbReference>
<dbReference type="PROSITE" id="PS50240">
    <property type="entry name" value="TRYPSIN_DOM"/>
    <property type="match status" value="1"/>
</dbReference>
<dbReference type="PROSITE" id="PS00135">
    <property type="entry name" value="TRYPSIN_SER"/>
    <property type="match status" value="1"/>
</dbReference>
<accession>Q71QI2</accession>
<proteinExistence type="evidence at transcript level"/>
<reference key="1">
    <citation type="submission" date="2001-06" db="EMBL/GenBank/DDBJ databases">
        <title>Identification of geographic variations and cloning of venom proteins of Trimeresurus stejnegeri: serine proteases and phospholipases.</title>
        <authorList>
            <person name="Tsai I.-H."/>
            <person name="Wang Y.-M."/>
        </authorList>
    </citation>
    <scope>NUCLEOTIDE SEQUENCE [MRNA]</scope>
    <source>
        <tissue>Venom gland</tissue>
    </source>
</reference>
<name>VSP2_TRIST</name>
<organism>
    <name type="scientific">Trimeresurus stejnegeri</name>
    <name type="common">Chinese green tree viper</name>
    <name type="synonym">Viridovipera stejnegeri</name>
    <dbReference type="NCBI Taxonomy" id="39682"/>
    <lineage>
        <taxon>Eukaryota</taxon>
        <taxon>Metazoa</taxon>
        <taxon>Chordata</taxon>
        <taxon>Craniata</taxon>
        <taxon>Vertebrata</taxon>
        <taxon>Euteleostomi</taxon>
        <taxon>Lepidosauria</taxon>
        <taxon>Squamata</taxon>
        <taxon>Bifurcata</taxon>
        <taxon>Unidentata</taxon>
        <taxon>Episquamata</taxon>
        <taxon>Toxicofera</taxon>
        <taxon>Serpentes</taxon>
        <taxon>Colubroidea</taxon>
        <taxon>Viperidae</taxon>
        <taxon>Crotalinae</taxon>
        <taxon>Trimeresurus</taxon>
    </lineage>
</organism>
<protein>
    <recommendedName>
        <fullName>Snake venom serine protease CL2</fullName>
        <shortName>SVSP</shortName>
        <ecNumber>3.4.21.-</ecNumber>
    </recommendedName>
</protein>
<evidence type="ECO:0000250" key="1"/>
<evidence type="ECO:0000255" key="2"/>
<evidence type="ECO:0000255" key="3">
    <source>
        <dbReference type="PROSITE-ProRule" id="PRU00274"/>
    </source>
</evidence>
<keyword id="KW-1015">Disulfide bond</keyword>
<keyword id="KW-0325">Glycoprotein</keyword>
<keyword id="KW-1199">Hemostasis impairing toxin</keyword>
<keyword id="KW-0378">Hydrolase</keyword>
<keyword id="KW-0645">Protease</keyword>
<keyword id="KW-0964">Secreted</keyword>
<keyword id="KW-0720">Serine protease</keyword>
<keyword id="KW-0732">Signal</keyword>
<keyword id="KW-0800">Toxin</keyword>
<keyword id="KW-0865">Zymogen</keyword>
<sequence length="258" mass="27866">MVLIRVLANLLIIQLSYAQKSSELVIGGDECNINEHRSLVVLFNSSGALCGGTLINQEYVLAAAHCDMPNMQILLGVHSASVLNDDEQARDPEEKYFCLSSNNDTKWDKDIMLIRLNRPVNNSVHIAPLSLPSSPPSVGSVCRIMGWGKTIPTQETHPDVPHCANIKLFHYSLCRAVYVGMPAQSRILCAGILQGGIGSCQGDSGGPLICNGQFQGIVSATSKPCAHSLMPALYIKVFDYTDWIKSIIAGNTTVTCPP</sequence>
<feature type="signal peptide" evidence="2">
    <location>
        <begin position="1"/>
        <end position="18"/>
    </location>
</feature>
<feature type="propeptide" id="PRO_0000295825" evidence="1">
    <location>
        <begin position="19"/>
        <end position="24"/>
    </location>
</feature>
<feature type="chain" id="PRO_5000061227" description="Snake venom serine protease CL2">
    <location>
        <begin position="25"/>
        <end position="258"/>
    </location>
</feature>
<feature type="domain" description="Peptidase S1" evidence="3">
    <location>
        <begin position="25"/>
        <end position="249"/>
    </location>
</feature>
<feature type="active site" description="Charge relay system" evidence="1">
    <location>
        <position position="65"/>
    </location>
</feature>
<feature type="active site" description="Charge relay system" evidence="1">
    <location>
        <position position="110"/>
    </location>
</feature>
<feature type="active site" description="Charge relay system" evidence="1">
    <location>
        <position position="204"/>
    </location>
</feature>
<feature type="glycosylation site" description="N-linked (GlcNAc...) asparagine" evidence="2">
    <location>
        <position position="44"/>
    </location>
</feature>
<feature type="glycosylation site" description="N-linked (GlcNAc...) asparagine" evidence="2">
    <location>
        <position position="103"/>
    </location>
</feature>
<feature type="glycosylation site" description="N-linked (GlcNAc...) asparagine" evidence="2">
    <location>
        <position position="121"/>
    </location>
</feature>
<feature type="glycosylation site" description="N-linked (GlcNAc...) asparagine" evidence="2">
    <location>
        <position position="251"/>
    </location>
</feature>
<feature type="disulfide bond" evidence="3">
    <location>
        <begin position="31"/>
        <end position="163"/>
    </location>
</feature>
<feature type="disulfide bond" evidence="3">
    <location>
        <begin position="50"/>
        <end position="66"/>
    </location>
</feature>
<feature type="disulfide bond" evidence="3">
    <location>
        <begin position="98"/>
        <end position="256"/>
    </location>
</feature>
<feature type="disulfide bond" evidence="3">
    <location>
        <begin position="142"/>
        <end position="210"/>
    </location>
</feature>
<feature type="disulfide bond" evidence="3">
    <location>
        <begin position="174"/>
        <end position="189"/>
    </location>
</feature>
<feature type="disulfide bond" evidence="3">
    <location>
        <begin position="200"/>
        <end position="225"/>
    </location>
</feature>